<dbReference type="EC" id="2.1.1.14" evidence="1"/>
<dbReference type="EMBL" id="BX572600">
    <property type="protein sequence ID" value="CAE27838.1"/>
    <property type="molecule type" value="Genomic_DNA"/>
</dbReference>
<dbReference type="RefSeq" id="WP_011157948.1">
    <property type="nucleotide sequence ID" value="NZ_CP116810.1"/>
</dbReference>
<dbReference type="SMR" id="Q6N765"/>
<dbReference type="STRING" id="258594.RPA2397"/>
<dbReference type="GeneID" id="66893456"/>
<dbReference type="eggNOG" id="COG0620">
    <property type="taxonomic scope" value="Bacteria"/>
</dbReference>
<dbReference type="HOGENOM" id="CLU_013175_0_0_5"/>
<dbReference type="PhylomeDB" id="Q6N765"/>
<dbReference type="UniPathway" id="UPA00051">
    <property type="reaction ID" value="UER00082"/>
</dbReference>
<dbReference type="GO" id="GO:0003871">
    <property type="term" value="F:5-methyltetrahydropteroyltriglutamate-homocysteine S-methyltransferase activity"/>
    <property type="evidence" value="ECO:0007669"/>
    <property type="project" value="UniProtKB-UniRule"/>
</dbReference>
<dbReference type="GO" id="GO:0008270">
    <property type="term" value="F:zinc ion binding"/>
    <property type="evidence" value="ECO:0007669"/>
    <property type="project" value="InterPro"/>
</dbReference>
<dbReference type="GO" id="GO:0009086">
    <property type="term" value="P:methionine biosynthetic process"/>
    <property type="evidence" value="ECO:0007669"/>
    <property type="project" value="UniProtKB-UniRule"/>
</dbReference>
<dbReference type="GO" id="GO:0032259">
    <property type="term" value="P:methylation"/>
    <property type="evidence" value="ECO:0007669"/>
    <property type="project" value="UniProtKB-KW"/>
</dbReference>
<dbReference type="CDD" id="cd03311">
    <property type="entry name" value="CIMS_C_terminal_like"/>
    <property type="match status" value="1"/>
</dbReference>
<dbReference type="CDD" id="cd03312">
    <property type="entry name" value="CIMS_N_terminal_like"/>
    <property type="match status" value="1"/>
</dbReference>
<dbReference type="FunFam" id="3.20.20.210:FF:000002">
    <property type="entry name" value="5-methyltetrahydropteroyltriglutamate--homocysteine methyltransferase"/>
    <property type="match status" value="1"/>
</dbReference>
<dbReference type="FunFam" id="3.20.20.210:FF:000003">
    <property type="entry name" value="5-methyltetrahydropteroyltriglutamate--homocysteine methyltransferase"/>
    <property type="match status" value="1"/>
</dbReference>
<dbReference type="Gene3D" id="3.20.20.210">
    <property type="match status" value="2"/>
</dbReference>
<dbReference type="HAMAP" id="MF_00172">
    <property type="entry name" value="Meth_synth"/>
    <property type="match status" value="1"/>
</dbReference>
<dbReference type="InterPro" id="IPR013215">
    <property type="entry name" value="Cbl-indep_Met_Synth_N"/>
</dbReference>
<dbReference type="InterPro" id="IPR006276">
    <property type="entry name" value="Cobalamin-indep_Met_synthase"/>
</dbReference>
<dbReference type="InterPro" id="IPR002629">
    <property type="entry name" value="Met_Synth_C/arc"/>
</dbReference>
<dbReference type="InterPro" id="IPR038071">
    <property type="entry name" value="UROD/MetE-like_sf"/>
</dbReference>
<dbReference type="NCBIfam" id="TIGR01371">
    <property type="entry name" value="met_syn_B12ind"/>
    <property type="match status" value="1"/>
</dbReference>
<dbReference type="NCBIfam" id="NF003556">
    <property type="entry name" value="PRK05222.1"/>
    <property type="match status" value="1"/>
</dbReference>
<dbReference type="PANTHER" id="PTHR30519">
    <property type="entry name" value="5-METHYLTETRAHYDROPTEROYLTRIGLUTAMATE--HOMOCYSTEINE METHYLTRANSFERASE"/>
    <property type="match status" value="1"/>
</dbReference>
<dbReference type="Pfam" id="PF08267">
    <property type="entry name" value="Meth_synt_1"/>
    <property type="match status" value="1"/>
</dbReference>
<dbReference type="Pfam" id="PF01717">
    <property type="entry name" value="Meth_synt_2"/>
    <property type="match status" value="1"/>
</dbReference>
<dbReference type="PIRSF" id="PIRSF000382">
    <property type="entry name" value="MeTrfase_B12_ind"/>
    <property type="match status" value="1"/>
</dbReference>
<dbReference type="SUPFAM" id="SSF51726">
    <property type="entry name" value="UROD/MetE-like"/>
    <property type="match status" value="2"/>
</dbReference>
<protein>
    <recommendedName>
        <fullName evidence="1">5-methyltetrahydropteroyltriglutamate--homocysteine methyltransferase</fullName>
        <ecNumber evidence="1">2.1.1.14</ecNumber>
    </recommendedName>
    <alternativeName>
        <fullName evidence="1">Cobalamin-independent methionine synthase</fullName>
    </alternativeName>
    <alternativeName>
        <fullName evidence="1">Methionine synthase, vitamin-B12 independent isozyme</fullName>
    </alternativeName>
</protein>
<keyword id="KW-0028">Amino-acid biosynthesis</keyword>
<keyword id="KW-0479">Metal-binding</keyword>
<keyword id="KW-0486">Methionine biosynthesis</keyword>
<keyword id="KW-0489">Methyltransferase</keyword>
<keyword id="KW-0677">Repeat</keyword>
<keyword id="KW-0808">Transferase</keyword>
<keyword id="KW-0862">Zinc</keyword>
<reference key="1">
    <citation type="journal article" date="2004" name="Nat. Biotechnol.">
        <title>Complete genome sequence of the metabolically versatile photosynthetic bacterium Rhodopseudomonas palustris.</title>
        <authorList>
            <person name="Larimer F.W."/>
            <person name="Chain P."/>
            <person name="Hauser L."/>
            <person name="Lamerdin J.E."/>
            <person name="Malfatti S."/>
            <person name="Do L."/>
            <person name="Land M.L."/>
            <person name="Pelletier D.A."/>
            <person name="Beatty J.T."/>
            <person name="Lang A.S."/>
            <person name="Tabita F.R."/>
            <person name="Gibson J.L."/>
            <person name="Hanson T.E."/>
            <person name="Bobst C."/>
            <person name="Torres y Torres J.L."/>
            <person name="Peres C."/>
            <person name="Harrison F.H."/>
            <person name="Gibson J."/>
            <person name="Harwood C.S."/>
        </authorList>
    </citation>
    <scope>NUCLEOTIDE SEQUENCE [LARGE SCALE GENOMIC DNA]</scope>
    <source>
        <strain>ATCC BAA-98 / CGA009</strain>
    </source>
</reference>
<gene>
    <name evidence="1" type="primary">metE</name>
    <name type="ordered locus">RPA2397</name>
</gene>
<proteinExistence type="inferred from homology"/>
<name>METE_RHOPA</name>
<organism>
    <name type="scientific">Rhodopseudomonas palustris (strain ATCC BAA-98 / CGA009)</name>
    <dbReference type="NCBI Taxonomy" id="258594"/>
    <lineage>
        <taxon>Bacteria</taxon>
        <taxon>Pseudomonadati</taxon>
        <taxon>Pseudomonadota</taxon>
        <taxon>Alphaproteobacteria</taxon>
        <taxon>Hyphomicrobiales</taxon>
        <taxon>Nitrobacteraceae</taxon>
        <taxon>Rhodopseudomonas</taxon>
    </lineage>
</organism>
<comment type="function">
    <text evidence="1">Catalyzes the transfer of a methyl group from 5-methyltetrahydrofolate to homocysteine resulting in methionine formation.</text>
</comment>
<comment type="catalytic activity">
    <reaction evidence="1">
        <text>5-methyltetrahydropteroyltri-L-glutamate + L-homocysteine = tetrahydropteroyltri-L-glutamate + L-methionine</text>
        <dbReference type="Rhea" id="RHEA:21196"/>
        <dbReference type="ChEBI" id="CHEBI:57844"/>
        <dbReference type="ChEBI" id="CHEBI:58140"/>
        <dbReference type="ChEBI" id="CHEBI:58199"/>
        <dbReference type="ChEBI" id="CHEBI:58207"/>
        <dbReference type="EC" id="2.1.1.14"/>
    </reaction>
</comment>
<comment type="cofactor">
    <cofactor evidence="1">
        <name>Zn(2+)</name>
        <dbReference type="ChEBI" id="CHEBI:29105"/>
    </cofactor>
    <text evidence="1">Binds 1 zinc ion per subunit.</text>
</comment>
<comment type="pathway">
    <text evidence="1">Amino-acid biosynthesis; L-methionine biosynthesis via de novo pathway; L-methionine from L-homocysteine (MetE route): step 1/1.</text>
</comment>
<comment type="similarity">
    <text evidence="1">Belongs to the vitamin-B12 independent methionine synthase family.</text>
</comment>
<sequence>MSSHTVSTSLAVATLGTPRIGPRRELKSALESFWAGKSTEADLLKVAAALRAANWARQSARGVSVIPSNDFSLYDQVLDTSVMVGAIPEIYGWRGGPVSLATYFAMARGTQAEIAGHGCANGHHHGDSTPQGVPAQEMTKWFDTNYHYMVPEFSAGQSFQLASVKPLEEYREAKALGYDTRPVLLGPVTYLKLGKSADAGLDVLSLLPKLVPVYIEILGRLAAAGAKWVQLDEPALVLDLDDRERLAFRDAYGQIARELPHLDIMLTTYFGGLGDNLDTALALPIAGLHLDLVRAPKQINAVIAKGPKDLVLSLGVVDGRNIWRADLPDLLDRVEPIVQQRGAERVQLAPSCSLLHVPVDLELETGLDPDLKSWLSFSLQKMGELSTLSRALSGDRAAVQDQLSASAKAAATRRKSPKVHDMAVSSRAAAVTPAMTQRNSGFAARATLQHQRLQLPAFPTTTIGSFPQTAQIRQARAAHAKGAISDADYNTFLRGETARAIQWQEKVGLDVLVHGEFERNDMVQYFGEQLSGFAFTKEGWVQSYGSRCVRPPILFGDVSRPKPMTVGWWKYAQSLTGRPMKGMLTGPVTILNWSFVRDDVPRSTACLQIALAIRDEVGDLEQAGATMIQIDEAALREGLPLRRSEWKGYLDWAVECFRLCSSGVKDETQIHTHMCYSEFNDIIDAIAAMDADVISIETSRSKMELLDAFKTYKYPNEIGPGVYDIHSPRVPSVEEMTTLLQLARQRLSDGQLWVNPDCGLKTRGWDEVQGALVNMVEAARQIRQVSAG</sequence>
<accession>Q6N765</accession>
<feature type="chain" id="PRO_0000098653" description="5-methyltetrahydropteroyltriglutamate--homocysteine methyltransferase">
    <location>
        <begin position="1"/>
        <end position="788"/>
    </location>
</feature>
<feature type="active site" description="Proton donor" evidence="1">
    <location>
        <position position="726"/>
    </location>
</feature>
<feature type="binding site" evidence="1">
    <location>
        <begin position="24"/>
        <end position="27"/>
    </location>
    <ligand>
        <name>5-methyltetrahydropteroyltri-L-glutamate</name>
        <dbReference type="ChEBI" id="CHEBI:58207"/>
    </ligand>
</feature>
<feature type="binding site" evidence="1">
    <location>
        <position position="140"/>
    </location>
    <ligand>
        <name>5-methyltetrahydropteroyltri-L-glutamate</name>
        <dbReference type="ChEBI" id="CHEBI:58207"/>
    </ligand>
</feature>
<feature type="binding site" evidence="1">
    <location>
        <begin position="463"/>
        <end position="465"/>
    </location>
    <ligand>
        <name>L-homocysteine</name>
        <dbReference type="ChEBI" id="CHEBI:58199"/>
    </ligand>
</feature>
<feature type="binding site" evidence="1">
    <location>
        <begin position="463"/>
        <end position="465"/>
    </location>
    <ligand>
        <name>L-methionine</name>
        <dbReference type="ChEBI" id="CHEBI:57844"/>
    </ligand>
</feature>
<feature type="binding site" evidence="1">
    <location>
        <position position="516"/>
    </location>
    <ligand>
        <name>L-homocysteine</name>
        <dbReference type="ChEBI" id="CHEBI:58199"/>
    </ligand>
</feature>
<feature type="binding site" evidence="1">
    <location>
        <position position="516"/>
    </location>
    <ligand>
        <name>L-methionine</name>
        <dbReference type="ChEBI" id="CHEBI:57844"/>
    </ligand>
</feature>
<feature type="binding site" evidence="1">
    <location>
        <begin position="547"/>
        <end position="548"/>
    </location>
    <ligand>
        <name>5-methyltetrahydropteroyltri-L-glutamate</name>
        <dbReference type="ChEBI" id="CHEBI:58207"/>
    </ligand>
</feature>
<feature type="binding site" evidence="1">
    <location>
        <position position="593"/>
    </location>
    <ligand>
        <name>5-methyltetrahydropteroyltri-L-glutamate</name>
        <dbReference type="ChEBI" id="CHEBI:58207"/>
    </ligand>
</feature>
<feature type="binding site" evidence="1">
    <location>
        <position position="631"/>
    </location>
    <ligand>
        <name>L-homocysteine</name>
        <dbReference type="ChEBI" id="CHEBI:58199"/>
    </ligand>
</feature>
<feature type="binding site" evidence="1">
    <location>
        <position position="631"/>
    </location>
    <ligand>
        <name>L-methionine</name>
        <dbReference type="ChEBI" id="CHEBI:57844"/>
    </ligand>
</feature>
<feature type="binding site" evidence="1">
    <location>
        <position position="637"/>
    </location>
    <ligand>
        <name>5-methyltetrahydropteroyltri-L-glutamate</name>
        <dbReference type="ChEBI" id="CHEBI:58207"/>
    </ligand>
</feature>
<feature type="binding site" evidence="1">
    <location>
        <position position="673"/>
    </location>
    <ligand>
        <name>Zn(2+)</name>
        <dbReference type="ChEBI" id="CHEBI:29105"/>
        <note>catalytic</note>
    </ligand>
</feature>
<feature type="binding site" evidence="1">
    <location>
        <position position="675"/>
    </location>
    <ligand>
        <name>Zn(2+)</name>
        <dbReference type="ChEBI" id="CHEBI:29105"/>
        <note>catalytic</note>
    </ligand>
</feature>
<feature type="binding site" evidence="1">
    <location>
        <position position="697"/>
    </location>
    <ligand>
        <name>Zn(2+)</name>
        <dbReference type="ChEBI" id="CHEBI:29105"/>
        <note>catalytic</note>
    </ligand>
</feature>
<feature type="binding site" evidence="1">
    <location>
        <position position="758"/>
    </location>
    <ligand>
        <name>Zn(2+)</name>
        <dbReference type="ChEBI" id="CHEBI:29105"/>
        <note>catalytic</note>
    </ligand>
</feature>
<evidence type="ECO:0000255" key="1">
    <source>
        <dbReference type="HAMAP-Rule" id="MF_00172"/>
    </source>
</evidence>